<accession>B0YPN8</accession>
<proteinExistence type="inferred from homology"/>
<evidence type="ECO:0000255" key="1">
    <source>
        <dbReference type="HAMAP-Rule" id="MF_01338"/>
    </source>
</evidence>
<evidence type="ECO:0000305" key="2"/>
<comment type="function">
    <text evidence="1">RuBisCO catalyzes two reactions: the carboxylation of D-ribulose 1,5-bisphosphate, the primary event in carbon dioxide fixation, as well as the oxidative fragmentation of the pentose substrate in the photorespiration process. Both reactions occur simultaneously and in competition at the same active site.</text>
</comment>
<comment type="catalytic activity">
    <reaction evidence="1">
        <text>2 (2R)-3-phosphoglycerate + 2 H(+) = D-ribulose 1,5-bisphosphate + CO2 + H2O</text>
        <dbReference type="Rhea" id="RHEA:23124"/>
        <dbReference type="ChEBI" id="CHEBI:15377"/>
        <dbReference type="ChEBI" id="CHEBI:15378"/>
        <dbReference type="ChEBI" id="CHEBI:16526"/>
        <dbReference type="ChEBI" id="CHEBI:57870"/>
        <dbReference type="ChEBI" id="CHEBI:58272"/>
        <dbReference type="EC" id="4.1.1.39"/>
    </reaction>
</comment>
<comment type="catalytic activity">
    <reaction evidence="1">
        <text>D-ribulose 1,5-bisphosphate + O2 = 2-phosphoglycolate + (2R)-3-phosphoglycerate + 2 H(+)</text>
        <dbReference type="Rhea" id="RHEA:36631"/>
        <dbReference type="ChEBI" id="CHEBI:15378"/>
        <dbReference type="ChEBI" id="CHEBI:15379"/>
        <dbReference type="ChEBI" id="CHEBI:57870"/>
        <dbReference type="ChEBI" id="CHEBI:58033"/>
        <dbReference type="ChEBI" id="CHEBI:58272"/>
    </reaction>
</comment>
<comment type="cofactor">
    <cofactor evidence="1">
        <name>Mg(2+)</name>
        <dbReference type="ChEBI" id="CHEBI:18420"/>
    </cofactor>
    <text evidence="1">Binds 1 Mg(2+) ion per subunit.</text>
</comment>
<comment type="subunit">
    <text evidence="1">Heterohexadecamer of 8 large chains and 8 small chains.</text>
</comment>
<comment type="subcellular location">
    <subcellularLocation>
        <location>Plastid</location>
    </subcellularLocation>
</comment>
<comment type="miscellaneous">
    <text evidence="1">The basic functional RuBisCO is composed of a large chain homodimer in a 'head-to-tail' conformation. In form I RuBisCO this homodimer is arranged in a barrel-like tetramer with the small subunits forming a tetrameric 'cap' on each end of the 'barrel'.</text>
</comment>
<comment type="similarity">
    <text evidence="1">Belongs to the RuBisCO large chain family. Type I subfamily.</text>
</comment>
<comment type="caution">
    <text evidence="2">This organism being non-photosynthetic, the role of this protein is uncertain.</text>
</comment>
<reference key="1">
    <citation type="journal article" date="2008" name="Mol. Biol. Evol.">
        <title>Functional gene losses occur with minimal size reduction in the plastid genome of the parasitic liverwort Aneura mirabilis.</title>
        <authorList>
            <person name="Wickett N.J."/>
            <person name="Zhang Y."/>
            <person name="Hansen S.K."/>
            <person name="Roper J.M."/>
            <person name="Kuehl J.V."/>
            <person name="Plock S.A."/>
            <person name="Wolf P.G."/>
            <person name="dePamphilis C.W."/>
            <person name="Boore J.L."/>
            <person name="Goffinet B."/>
        </authorList>
    </citation>
    <scope>NUCLEOTIDE SEQUENCE [LARGE SCALE GENOMIC DNA]</scope>
</reference>
<sequence length="475" mass="52537">MSPQTETKAGVGFKAGVKDYRLTYYTPEYETKETDILAAFRMTPQPGVPPEEAGAAVAAESSTGTWTTVWTDGLTSLDRYKGRCYDIEPVAGEENQYIAYVAYPLDLFEEGSVTNLFTSIVGNVFGFKALRALRLEDLRIPPSYVKTFQGPPHGIQVERDKLNKYGRPLLGCTIKPKLGLSAKNYGRAVYECLRGGLDFTKDDENVNSQPFMRWRDRFLFVAEAIFKSQAETGEIKGHYSNATAGTSEEMLKRAACARELGVPIIMHDYLTGGFTANTSLAHYCRDNGLLLHIHRAMHAVIDRQKNHGMHFRVLAKASRLSGGDHIHAGTVVGKLEGEREVTSGFVDSLRDDYIERDRSRGIYFTQDWVSLPGVLPVASGGIHVWHMPALTEIFGDDSVLQFGGGTLGHPWGNAPGAVANRVASEACVQARNEGRDLAREGNEVIREASKWSPDLAAACEVWKEIKFEYETIDTL</sequence>
<geneLocation type="non-photosynthetic plastid"/>
<protein>
    <recommendedName>
        <fullName evidence="1">Ribulose bisphosphate carboxylase large chain</fullName>
        <shortName evidence="1">RuBisCO large subunit</shortName>
        <ecNumber evidence="1">4.1.1.39</ecNumber>
    </recommendedName>
</protein>
<organism>
    <name type="scientific">Aneura mirabilis</name>
    <name type="common">Parasitic liverwort</name>
    <name type="synonym">Cryptothallus mirabilis</name>
    <dbReference type="NCBI Taxonomy" id="280810"/>
    <lineage>
        <taxon>Eukaryota</taxon>
        <taxon>Viridiplantae</taxon>
        <taxon>Streptophyta</taxon>
        <taxon>Embryophyta</taxon>
        <taxon>Marchantiophyta</taxon>
        <taxon>Jungermanniopsida</taxon>
        <taxon>Metzgeriidae</taxon>
        <taxon>Metzgeriales</taxon>
        <taxon>Aneuraceae</taxon>
        <taxon>Aneura</taxon>
    </lineage>
</organism>
<name>RBL_ANEMR</name>
<dbReference type="EC" id="4.1.1.39" evidence="1"/>
<dbReference type="EMBL" id="EU043314">
    <property type="protein sequence ID" value="ABS54485.1"/>
    <property type="molecule type" value="Genomic_DNA"/>
</dbReference>
<dbReference type="RefSeq" id="YP_001687224.1">
    <property type="nucleotide sequence ID" value="NC_010359.1"/>
</dbReference>
<dbReference type="SMR" id="B0YPN8"/>
<dbReference type="GeneID" id="5952225"/>
<dbReference type="GO" id="GO:0009536">
    <property type="term" value="C:plastid"/>
    <property type="evidence" value="ECO:0007669"/>
    <property type="project" value="UniProtKB-SubCell"/>
</dbReference>
<dbReference type="GO" id="GO:0000287">
    <property type="term" value="F:magnesium ion binding"/>
    <property type="evidence" value="ECO:0007669"/>
    <property type="project" value="UniProtKB-UniRule"/>
</dbReference>
<dbReference type="GO" id="GO:0004497">
    <property type="term" value="F:monooxygenase activity"/>
    <property type="evidence" value="ECO:0007669"/>
    <property type="project" value="UniProtKB-KW"/>
</dbReference>
<dbReference type="GO" id="GO:0016984">
    <property type="term" value="F:ribulose-bisphosphate carboxylase activity"/>
    <property type="evidence" value="ECO:0007669"/>
    <property type="project" value="UniProtKB-UniRule"/>
</dbReference>
<dbReference type="GO" id="GO:0015977">
    <property type="term" value="P:carbon fixation"/>
    <property type="evidence" value="ECO:0007669"/>
    <property type="project" value="UniProtKB-UniRule"/>
</dbReference>
<dbReference type="GO" id="GO:0009853">
    <property type="term" value="P:photorespiration"/>
    <property type="evidence" value="ECO:0007669"/>
    <property type="project" value="UniProtKB-KW"/>
</dbReference>
<dbReference type="CDD" id="cd08212">
    <property type="entry name" value="RuBisCO_large_I"/>
    <property type="match status" value="1"/>
</dbReference>
<dbReference type="FunFam" id="3.20.20.110:FF:000001">
    <property type="entry name" value="Ribulose bisphosphate carboxylase large chain"/>
    <property type="match status" value="1"/>
</dbReference>
<dbReference type="FunFam" id="3.30.70.150:FF:000001">
    <property type="entry name" value="Ribulose bisphosphate carboxylase large chain"/>
    <property type="match status" value="1"/>
</dbReference>
<dbReference type="Gene3D" id="3.20.20.110">
    <property type="entry name" value="Ribulose bisphosphate carboxylase, large subunit, C-terminal domain"/>
    <property type="match status" value="1"/>
</dbReference>
<dbReference type="Gene3D" id="3.30.70.150">
    <property type="entry name" value="RuBisCO large subunit, N-terminal domain"/>
    <property type="match status" value="1"/>
</dbReference>
<dbReference type="HAMAP" id="MF_01338">
    <property type="entry name" value="RuBisCO_L_type1"/>
    <property type="match status" value="1"/>
</dbReference>
<dbReference type="InterPro" id="IPR033966">
    <property type="entry name" value="RuBisCO"/>
</dbReference>
<dbReference type="InterPro" id="IPR020878">
    <property type="entry name" value="RuBisCo_large_chain_AS"/>
</dbReference>
<dbReference type="InterPro" id="IPR000685">
    <property type="entry name" value="RuBisCO_lsu_C"/>
</dbReference>
<dbReference type="InterPro" id="IPR036376">
    <property type="entry name" value="RuBisCO_lsu_C_sf"/>
</dbReference>
<dbReference type="InterPro" id="IPR017443">
    <property type="entry name" value="RuBisCO_lsu_fd_N"/>
</dbReference>
<dbReference type="InterPro" id="IPR036422">
    <property type="entry name" value="RuBisCO_lsu_N_sf"/>
</dbReference>
<dbReference type="InterPro" id="IPR020888">
    <property type="entry name" value="RuBisCO_lsuI"/>
</dbReference>
<dbReference type="NCBIfam" id="NF003252">
    <property type="entry name" value="PRK04208.1"/>
    <property type="match status" value="1"/>
</dbReference>
<dbReference type="PANTHER" id="PTHR42704">
    <property type="entry name" value="RIBULOSE BISPHOSPHATE CARBOXYLASE"/>
    <property type="match status" value="1"/>
</dbReference>
<dbReference type="PANTHER" id="PTHR42704:SF17">
    <property type="entry name" value="RIBULOSE BISPHOSPHATE CARBOXYLASE LARGE CHAIN"/>
    <property type="match status" value="1"/>
</dbReference>
<dbReference type="Pfam" id="PF00016">
    <property type="entry name" value="RuBisCO_large"/>
    <property type="match status" value="1"/>
</dbReference>
<dbReference type="Pfam" id="PF02788">
    <property type="entry name" value="RuBisCO_large_N"/>
    <property type="match status" value="1"/>
</dbReference>
<dbReference type="SFLD" id="SFLDG01052">
    <property type="entry name" value="RuBisCO"/>
    <property type="match status" value="1"/>
</dbReference>
<dbReference type="SFLD" id="SFLDS00014">
    <property type="entry name" value="RuBisCO"/>
    <property type="match status" value="1"/>
</dbReference>
<dbReference type="SFLD" id="SFLDG00301">
    <property type="entry name" value="RuBisCO-like_proteins"/>
    <property type="match status" value="1"/>
</dbReference>
<dbReference type="SUPFAM" id="SSF51649">
    <property type="entry name" value="RuBisCo, C-terminal domain"/>
    <property type="match status" value="1"/>
</dbReference>
<dbReference type="SUPFAM" id="SSF54966">
    <property type="entry name" value="RuBisCO, large subunit, small (N-terminal) domain"/>
    <property type="match status" value="1"/>
</dbReference>
<dbReference type="PROSITE" id="PS00157">
    <property type="entry name" value="RUBISCO_LARGE"/>
    <property type="match status" value="1"/>
</dbReference>
<gene>
    <name evidence="1" type="primary">rbcL</name>
</gene>
<feature type="propeptide" id="PRO_0000355756" evidence="1">
    <location>
        <begin position="1"/>
        <end position="2"/>
    </location>
</feature>
<feature type="chain" id="PRO_0000355757" description="Ribulose bisphosphate carboxylase large chain">
    <location>
        <begin position="3"/>
        <end position="475"/>
    </location>
</feature>
<feature type="active site" description="Proton acceptor" evidence="1">
    <location>
        <position position="175"/>
    </location>
</feature>
<feature type="active site" description="Proton acceptor" evidence="1">
    <location>
        <position position="294"/>
    </location>
</feature>
<feature type="binding site" description="in homodimeric partner" evidence="1">
    <location>
        <position position="123"/>
    </location>
    <ligand>
        <name>substrate</name>
    </ligand>
</feature>
<feature type="binding site" evidence="1">
    <location>
        <position position="173"/>
    </location>
    <ligand>
        <name>substrate</name>
    </ligand>
</feature>
<feature type="binding site" evidence="1">
    <location>
        <position position="177"/>
    </location>
    <ligand>
        <name>substrate</name>
    </ligand>
</feature>
<feature type="binding site" description="via carbamate group" evidence="1">
    <location>
        <position position="201"/>
    </location>
    <ligand>
        <name>Mg(2+)</name>
        <dbReference type="ChEBI" id="CHEBI:18420"/>
    </ligand>
</feature>
<feature type="binding site" evidence="1">
    <location>
        <position position="203"/>
    </location>
    <ligand>
        <name>Mg(2+)</name>
        <dbReference type="ChEBI" id="CHEBI:18420"/>
    </ligand>
</feature>
<feature type="binding site" evidence="1">
    <location>
        <position position="204"/>
    </location>
    <ligand>
        <name>Mg(2+)</name>
        <dbReference type="ChEBI" id="CHEBI:18420"/>
    </ligand>
</feature>
<feature type="binding site" evidence="1">
    <location>
        <position position="295"/>
    </location>
    <ligand>
        <name>substrate</name>
    </ligand>
</feature>
<feature type="binding site" evidence="1">
    <location>
        <position position="327"/>
    </location>
    <ligand>
        <name>substrate</name>
    </ligand>
</feature>
<feature type="binding site" evidence="1">
    <location>
        <position position="379"/>
    </location>
    <ligand>
        <name>substrate</name>
    </ligand>
</feature>
<feature type="site" description="Transition state stabilizer" evidence="1">
    <location>
        <position position="334"/>
    </location>
</feature>
<feature type="modified residue" description="N-acetylproline" evidence="1">
    <location>
        <position position="3"/>
    </location>
</feature>
<feature type="modified residue" description="N6,N6,N6-trimethyllysine" evidence="1">
    <location>
        <position position="14"/>
    </location>
</feature>
<feature type="modified residue" description="N6-carboxylysine" evidence="1">
    <location>
        <position position="201"/>
    </location>
</feature>
<keyword id="KW-0007">Acetylation</keyword>
<keyword id="KW-0113">Calvin cycle</keyword>
<keyword id="KW-0120">Carbon dioxide fixation</keyword>
<keyword id="KW-0456">Lyase</keyword>
<keyword id="KW-0460">Magnesium</keyword>
<keyword id="KW-0479">Metal-binding</keyword>
<keyword id="KW-0488">Methylation</keyword>
<keyword id="KW-0503">Monooxygenase</keyword>
<keyword id="KW-0560">Oxidoreductase</keyword>
<keyword id="KW-0601">Photorespiration</keyword>
<keyword id="KW-0934">Plastid</keyword>